<reference evidence="6 7" key="1">
    <citation type="journal article" date="2019" name="Br. J. Pharmacol.">
        <title>From identification to functional characterization of cyriotoxin-1a, an antinociceptive toxin from the spider Cyriopagopus schioedtei.</title>
        <authorList>
            <person name="Goncalves T.C."/>
            <person name="Benoit E."/>
            <person name="Kurz M."/>
            <person name="Lucarain L."/>
            <person name="Fouconnier S."/>
            <person name="Combemale S."/>
            <person name="Jaquillard L."/>
            <person name="Schombert B."/>
            <person name="Chambard J.M."/>
            <person name="Boukaiba R."/>
            <person name="Hessler G."/>
            <person name="Bohme A."/>
            <person name="Bialy L."/>
            <person name="Hourcade S."/>
            <person name="Beroud R."/>
            <person name="De Waard M."/>
            <person name="Servent D."/>
            <person name="Partiseti M."/>
        </authorList>
    </citation>
    <scope>PROTEIN SEQUENCE</scope>
    <scope>FUNCTION</scope>
    <scope>MASS SPECTROMETRY</scope>
    <scope>SYNTHESIS</scope>
    <scope>STRUCTURE BY NMR</scope>
    <scope>DISULFIDE BONDS</scope>
    <scope>AMIDATION AT LEU-33</scope>
    <scope>TOXIC DOSE</scope>
    <source>
        <tissue>Venom</tissue>
    </source>
</reference>
<keyword id="KW-0002">3D-structure</keyword>
<keyword id="KW-0027">Amidation</keyword>
<keyword id="KW-0903">Direct protein sequencing</keyword>
<keyword id="KW-1015">Disulfide bond</keyword>
<keyword id="KW-0872">Ion channel impairing toxin</keyword>
<keyword id="KW-0528">Neurotoxin</keyword>
<keyword id="KW-0964">Secreted</keyword>
<keyword id="KW-0800">Toxin</keyword>
<keyword id="KW-0738">Voltage-gated sodium channel impairing toxin</keyword>
<feature type="chain" id="PRO_0000452541" description="Mu-theraphotoxin-Os1a" evidence="2">
    <location>
        <begin position="1"/>
        <end position="33"/>
    </location>
</feature>
<feature type="modified residue" description="Leucine amide" evidence="2">
    <location>
        <position position="33"/>
    </location>
</feature>
<feature type="disulfide bond" evidence="2 7">
    <location>
        <begin position="2"/>
        <end position="17"/>
    </location>
</feature>
<feature type="disulfide bond" evidence="2 7">
    <location>
        <begin position="9"/>
        <end position="22"/>
    </location>
</feature>
<feature type="disulfide bond" evidence="2 7">
    <location>
        <begin position="16"/>
        <end position="29"/>
    </location>
</feature>
<feature type="strand" evidence="8">
    <location>
        <begin position="13"/>
        <end position="16"/>
    </location>
</feature>
<feature type="strand" evidence="8">
    <location>
        <begin position="20"/>
        <end position="22"/>
    </location>
</feature>
<feature type="turn" evidence="8">
    <location>
        <begin position="24"/>
        <end position="26"/>
    </location>
</feature>
<feature type="strand" evidence="8">
    <location>
        <begin position="28"/>
        <end position="31"/>
    </location>
</feature>
<name>TXNA1_OMOSC</name>
<sequence length="33" mass="3588">ECKGFGKSCVPGKNECCSGLTCSNKHKWCKVLL</sequence>
<comment type="function">
    <text evidence="2">Potently and reversibly inhibits some human voltage-gated sodium channels (Nav1.1/SCN1A (IC(50)=72.0 nM), Nav1.2/SCN2A (IC(50)=75.5 nM), Nav1.6/SCN8A (IC(50)=115.0 nM), Nav1.7/SCN9A (IC(50)=52.7-129.5 nM), Nav1.3/SCN3A (IC(50)=306.6 nM)) (PubMed:30784059). The hNav1.7/SCN9A channel inhibition occurs without any change in steady-state inactivation- and conductance-voltage relationships (PubMed:30784059). On adult mouse DRG neurons, this toxin is approximately 1000-fold more efficient to inhibit tetrodotoxin (TTX)-sensitive than TTX-resistant sodium currents (PubMed:30784059). In vivo, this toxin exhibits analgesic effects in mice pain models (PubMed:30784059).</text>
</comment>
<comment type="subunit">
    <text evidence="1">Monomer.</text>
</comment>
<comment type="subcellular location">
    <subcellularLocation>
        <location evidence="2">Secreted</location>
    </subcellularLocation>
</comment>
<comment type="tissue specificity">
    <text evidence="5">Expressed by the venom gland.</text>
</comment>
<comment type="domain">
    <text evidence="2">The presence of a 'disulfide through disulfide knot' structurally defines this protein as a knottin.</text>
</comment>
<comment type="mass spectrometry" mass="3578.68" method="Electrospray" evidence="2"/>
<comment type="toxic dose">
    <text evidence="2">LD(50) is 144.4 nmol/kg by intramuscular injection within 1 hr.</text>
</comment>
<comment type="miscellaneous">
    <text evidence="2">Shows low or no activity on hNav1.4/SCN4A (IC(50)=7.7 uM), hNav1.5/SCN5A (IC(50)&gt;10 uM), hNav1.8/SCN10A (IC(50)&gt;10 uM), hCav1.2/CACNA1C, hCav3.1/CACNA1G, hCav3.2CACNA1H, hKv7.1/KCNQ1, Kv11.1/KCNH2/ERG1, and hKir2.1/KCNJ2/IRK1 channels.</text>
</comment>
<comment type="similarity">
    <text evidence="4">Belongs to the neurotoxin 10 (Hwtx-1) family. 14 (Hntx-1) subfamily.</text>
</comment>
<accession>A0A4V8GZX0</accession>
<evidence type="ECO:0000250" key="1">
    <source>
        <dbReference type="UniProtKB" id="D2Y1X8"/>
    </source>
</evidence>
<evidence type="ECO:0000269" key="2">
    <source>
    </source>
</evidence>
<evidence type="ECO:0000303" key="3">
    <source>
    </source>
</evidence>
<evidence type="ECO:0000305" key="4"/>
<evidence type="ECO:0000305" key="5">
    <source>
    </source>
</evidence>
<evidence type="ECO:0000312" key="6">
    <source>
        <dbReference type="PDB" id="6GFT"/>
    </source>
</evidence>
<evidence type="ECO:0007744" key="7">
    <source>
        <dbReference type="PDB" id="6GFT"/>
    </source>
</evidence>
<evidence type="ECO:0007829" key="8">
    <source>
        <dbReference type="PDB" id="6GFT"/>
    </source>
</evidence>
<proteinExistence type="evidence at protein level"/>
<protein>
    <recommendedName>
        <fullName evidence="4">Mu-theraphotoxin-Os1a</fullName>
        <shortName evidence="4">Mu-TRTX-Os1a</shortName>
    </recommendedName>
    <alternativeName>
        <fullName evidence="3">Cyriotoxin-1a</fullName>
        <shortName evidence="3">CyrTx-1a</shortName>
    </alternativeName>
    <alternativeName>
        <fullName evidence="3">Mu-theraphotoxin-Cs1a</fullName>
    </alternativeName>
</protein>
<dbReference type="PDB" id="6GFT">
    <property type="method" value="NMR"/>
    <property type="chains" value="A=1-33"/>
</dbReference>
<dbReference type="PDBsum" id="6GFT"/>
<dbReference type="BMRB" id="A0A4V8GZX0"/>
<dbReference type="SMR" id="A0A4V8GZX0"/>
<dbReference type="GO" id="GO:0005576">
    <property type="term" value="C:extracellular region"/>
    <property type="evidence" value="ECO:0007669"/>
    <property type="project" value="UniProtKB-SubCell"/>
</dbReference>
<dbReference type="GO" id="GO:0008200">
    <property type="term" value="F:ion channel inhibitor activity"/>
    <property type="evidence" value="ECO:0007669"/>
    <property type="project" value="InterPro"/>
</dbReference>
<dbReference type="GO" id="GO:0017080">
    <property type="term" value="F:sodium channel regulator activity"/>
    <property type="evidence" value="ECO:0007669"/>
    <property type="project" value="UniProtKB-KW"/>
</dbReference>
<dbReference type="GO" id="GO:0090729">
    <property type="term" value="F:toxin activity"/>
    <property type="evidence" value="ECO:0007669"/>
    <property type="project" value="UniProtKB-KW"/>
</dbReference>
<dbReference type="InterPro" id="IPR011696">
    <property type="entry name" value="Huwentoxin-1"/>
</dbReference>
<dbReference type="InterPro" id="IPR013140">
    <property type="entry name" value="Huwentoxin_CS1"/>
</dbReference>
<dbReference type="Pfam" id="PF07740">
    <property type="entry name" value="Toxin_12"/>
    <property type="match status" value="1"/>
</dbReference>
<dbReference type="SUPFAM" id="SSF57059">
    <property type="entry name" value="omega toxin-like"/>
    <property type="match status" value="1"/>
</dbReference>
<dbReference type="PROSITE" id="PS60021">
    <property type="entry name" value="HWTX_1"/>
    <property type="match status" value="1"/>
</dbReference>
<organism>
    <name type="scientific">Omothymus schioedtei</name>
    <name type="common">Malaysian earth tiger tarantula</name>
    <name type="synonym">Cyriopagopus schioedtei</name>
    <dbReference type="NCBI Taxonomy" id="1046902"/>
    <lineage>
        <taxon>Eukaryota</taxon>
        <taxon>Metazoa</taxon>
        <taxon>Ecdysozoa</taxon>
        <taxon>Arthropoda</taxon>
        <taxon>Chelicerata</taxon>
        <taxon>Arachnida</taxon>
        <taxon>Araneae</taxon>
        <taxon>Mygalomorphae</taxon>
        <taxon>Theraphosidae</taxon>
        <taxon>Cyriopagopus</taxon>
    </lineage>
</organism>